<proteinExistence type="evidence at protein level"/>
<comment type="function">
    <text evidence="1">May cause loosening and extension of plant cell walls by disrupting non-covalent bonding between cellulose microfibrils and matrix glucans. No enzymatic activity has been found. May be required for rapid internodal elongation in deepwater rice during submergence (By similarity).</text>
</comment>
<comment type="subcellular location">
    <subcellularLocation>
        <location evidence="1">Secreted</location>
        <location evidence="1">Cell wall</location>
    </subcellularLocation>
    <subcellularLocation>
        <location evidence="1">Membrane</location>
        <topology evidence="1">Peripheral membrane protein</topology>
    </subcellularLocation>
</comment>
<comment type="tissue specificity">
    <text>Expressed in mature anthers but not in vegetative or other floral tissues.</text>
</comment>
<comment type="allergen">
    <text evidence="5">Causes an allergic reaction in human. Causes grass pollen allergy. Binds to IgE.</text>
</comment>
<comment type="similarity">
    <text evidence="6">Belongs to the expansin family. Expansin B subfamily.</text>
</comment>
<comment type="sequence caution" evidence="6">
    <conflict type="frameshift">
        <sequence resource="EMBL-CDS" id="AAA86533"/>
    </conflict>
</comment>
<comment type="sequence caution" evidence="6">
    <conflict type="miscellaneous discrepancy">
        <sequence resource="EMBL-CDS" id="AAA86533"/>
    </conflict>
    <text>Sequencing errors.</text>
</comment>
<comment type="online information" name="EXPANSIN homepage">
    <link uri="https://www.dept.psu.edu/biology/groups/expansins/index.htm"/>
</comment>
<organism>
    <name type="scientific">Oryza sativa subsp. japonica</name>
    <name type="common">Rice</name>
    <dbReference type="NCBI Taxonomy" id="39947"/>
    <lineage>
        <taxon>Eukaryota</taxon>
        <taxon>Viridiplantae</taxon>
        <taxon>Streptophyta</taxon>
        <taxon>Embryophyta</taxon>
        <taxon>Tracheophyta</taxon>
        <taxon>Spermatophyta</taxon>
        <taxon>Magnoliopsida</taxon>
        <taxon>Liliopsida</taxon>
        <taxon>Poales</taxon>
        <taxon>Poaceae</taxon>
        <taxon>BOP clade</taxon>
        <taxon>Oryzoideae</taxon>
        <taxon>Oryzeae</taxon>
        <taxon>Oryzinae</taxon>
        <taxon>Oryza</taxon>
        <taxon>Oryza sativa</taxon>
    </lineage>
</organism>
<gene>
    <name type="primary">EXPB1a</name>
    <name type="ordered locus">Os03g0106500</name>
    <name type="ordered locus">LOC_Os03g01610</name>
    <name type="ORF">OSJNBa0009C08.15</name>
</gene>
<gene>
    <name type="primary">EXPB1b</name>
    <name type="ordered locus">Os03g0106900</name>
    <name type="ordered locus">LOC_Os03g01650</name>
    <name type="ORF">OSJNBa0009C08.19</name>
</gene>
<feature type="signal peptide" evidence="2">
    <location>
        <begin position="1"/>
        <end position="22"/>
    </location>
</feature>
<feature type="chain" id="PRO_0000008721" description="Expansin-B1">
    <location>
        <begin position="23"/>
        <end position="267"/>
    </location>
</feature>
<feature type="domain" description="Expansin-like EG45" evidence="4">
    <location>
        <begin position="61"/>
        <end position="167"/>
    </location>
</feature>
<feature type="domain" description="Expansin-like CBD" evidence="3">
    <location>
        <begin position="181"/>
        <end position="262"/>
    </location>
</feature>
<feature type="glycosylation site" description="N-linked (GlcNAc...) asparagine" evidence="2">
    <location>
        <position position="32"/>
    </location>
</feature>
<feature type="disulfide bond" evidence="4">
    <location>
        <begin position="64"/>
        <end position="92"/>
    </location>
</feature>
<feature type="disulfide bond" evidence="4">
    <location>
        <begin position="95"/>
        <end position="162"/>
    </location>
</feature>
<feature type="disulfide bond" evidence="4">
    <location>
        <begin position="100"/>
        <end position="106"/>
    </location>
</feature>
<reference key="1">
    <citation type="journal article" date="1995" name="Gene">
        <title>Cloning, expression and immunological characterization of Ory s 1, the major allergen of rice pollen.</title>
        <authorList>
            <person name="Xu H."/>
            <person name="Theerakulpisut P."/>
            <person name="Goulding N."/>
            <person name="Suphioglu C."/>
            <person name="Singh M.B."/>
            <person name="Bhalla P.L."/>
        </authorList>
    </citation>
    <scope>NUCLEOTIDE SEQUENCE [MRNA]</scope>
    <scope>ALLERGEN</scope>
    <source>
        <tissue>Anther</tissue>
    </source>
</reference>
<reference key="2">
    <citation type="journal article" date="1997" name="Proc. Natl. Acad. Sci. U.S.A.">
        <title>Group I allergens of grass pollen as cell wall-loosening agents.</title>
        <authorList>
            <person name="Cosgrove D.J."/>
            <person name="Bedinger P.A."/>
            <person name="Durachko D.M."/>
        </authorList>
    </citation>
    <scope>NUCLEOTIDE SEQUENCE [MRNA]</scope>
</reference>
<reference key="3">
    <citation type="journal article" date="2001" name="Plant Physiol.">
        <title>Expression of beta-expansins is correlated with internodal elongation in deepwater rice.</title>
        <authorList>
            <person name="Lee Y."/>
            <person name="Kende H."/>
        </authorList>
    </citation>
    <scope>NUCLEOTIDE SEQUENCE [GENOMIC DNA]</scope>
</reference>
<reference key="4">
    <citation type="journal article" date="2005" name="Genome Res.">
        <title>Sequence, annotation, and analysis of synteny between rice chromosome 3 and diverged grass species.</title>
        <authorList>
            <consortium name="The rice chromosome 3 sequencing consortium"/>
            <person name="Buell C.R."/>
            <person name="Yuan Q."/>
            <person name="Ouyang S."/>
            <person name="Liu J."/>
            <person name="Zhu W."/>
            <person name="Wang A."/>
            <person name="Maiti R."/>
            <person name="Haas B."/>
            <person name="Wortman J."/>
            <person name="Pertea M."/>
            <person name="Jones K.M."/>
            <person name="Kim M."/>
            <person name="Overton L."/>
            <person name="Tsitrin T."/>
            <person name="Fadrosh D."/>
            <person name="Bera J."/>
            <person name="Weaver B."/>
            <person name="Jin S."/>
            <person name="Johri S."/>
            <person name="Reardon M."/>
            <person name="Webb K."/>
            <person name="Hill J."/>
            <person name="Moffat K."/>
            <person name="Tallon L."/>
            <person name="Van Aken S."/>
            <person name="Lewis M."/>
            <person name="Utterback T."/>
            <person name="Feldblyum T."/>
            <person name="Zismann V."/>
            <person name="Iobst S."/>
            <person name="Hsiao J."/>
            <person name="de Vazeille A.R."/>
            <person name="Salzberg S.L."/>
            <person name="White O."/>
            <person name="Fraser C.M."/>
            <person name="Yu Y."/>
            <person name="Kim H."/>
            <person name="Rambo T."/>
            <person name="Currie J."/>
            <person name="Collura K."/>
            <person name="Kernodle-Thompson S."/>
            <person name="Wei F."/>
            <person name="Kudrna K."/>
            <person name="Ammiraju J.S.S."/>
            <person name="Luo M."/>
            <person name="Goicoechea J.L."/>
            <person name="Wing R.A."/>
            <person name="Henry D."/>
            <person name="Oates R."/>
            <person name="Palmer M."/>
            <person name="Pries G."/>
            <person name="Saski C."/>
            <person name="Simmons J."/>
            <person name="Soderlund C."/>
            <person name="Nelson W."/>
            <person name="de la Bastide M."/>
            <person name="Spiegel L."/>
            <person name="Nascimento L."/>
            <person name="Huang E."/>
            <person name="Preston R."/>
            <person name="Zutavern T."/>
            <person name="Palmer L."/>
            <person name="O'Shaughnessy A."/>
            <person name="Dike S."/>
            <person name="McCombie W.R."/>
            <person name="Minx P."/>
            <person name="Cordum H."/>
            <person name="Wilson R."/>
            <person name="Jin W."/>
            <person name="Lee H.R."/>
            <person name="Jiang J."/>
            <person name="Jackson S."/>
        </authorList>
    </citation>
    <scope>NUCLEOTIDE SEQUENCE [LARGE SCALE GENOMIC DNA]</scope>
    <source>
        <strain>cv. Nipponbare</strain>
    </source>
</reference>
<reference key="5">
    <citation type="journal article" date="2005" name="Nature">
        <title>The map-based sequence of the rice genome.</title>
        <authorList>
            <consortium name="International rice genome sequencing project (IRGSP)"/>
        </authorList>
    </citation>
    <scope>NUCLEOTIDE SEQUENCE [LARGE SCALE GENOMIC DNA]</scope>
    <source>
        <strain>cv. Nipponbare</strain>
    </source>
</reference>
<reference key="6">
    <citation type="journal article" date="2008" name="Nucleic Acids Res.">
        <title>The rice annotation project database (RAP-DB): 2008 update.</title>
        <authorList>
            <consortium name="The rice annotation project (RAP)"/>
        </authorList>
    </citation>
    <scope>GENOME REANNOTATION</scope>
    <source>
        <strain>cv. Nipponbare</strain>
    </source>
</reference>
<reference key="7">
    <citation type="journal article" date="2013" name="Rice">
        <title>Improvement of the Oryza sativa Nipponbare reference genome using next generation sequence and optical map data.</title>
        <authorList>
            <person name="Kawahara Y."/>
            <person name="de la Bastide M."/>
            <person name="Hamilton J.P."/>
            <person name="Kanamori H."/>
            <person name="McCombie W.R."/>
            <person name="Ouyang S."/>
            <person name="Schwartz D.C."/>
            <person name="Tanaka T."/>
            <person name="Wu J."/>
            <person name="Zhou S."/>
            <person name="Childs K.L."/>
            <person name="Davidson R.M."/>
            <person name="Lin H."/>
            <person name="Quesada-Ocampo L."/>
            <person name="Vaillancourt B."/>
            <person name="Sakai H."/>
            <person name="Lee S.S."/>
            <person name="Kim J."/>
            <person name="Numa H."/>
            <person name="Itoh T."/>
            <person name="Buell C.R."/>
            <person name="Matsumoto T."/>
        </authorList>
    </citation>
    <scope>GENOME REANNOTATION</scope>
    <source>
        <strain>cv. Nipponbare</strain>
    </source>
</reference>
<reference key="8">
    <citation type="journal article" date="2005" name="PLoS Biol.">
        <title>The genomes of Oryza sativa: a history of duplications.</title>
        <authorList>
            <person name="Yu J."/>
            <person name="Wang J."/>
            <person name="Lin W."/>
            <person name="Li S."/>
            <person name="Li H."/>
            <person name="Zhou J."/>
            <person name="Ni P."/>
            <person name="Dong W."/>
            <person name="Hu S."/>
            <person name="Zeng C."/>
            <person name="Zhang J."/>
            <person name="Zhang Y."/>
            <person name="Li R."/>
            <person name="Xu Z."/>
            <person name="Li S."/>
            <person name="Li X."/>
            <person name="Zheng H."/>
            <person name="Cong L."/>
            <person name="Lin L."/>
            <person name="Yin J."/>
            <person name="Geng J."/>
            <person name="Li G."/>
            <person name="Shi J."/>
            <person name="Liu J."/>
            <person name="Lv H."/>
            <person name="Li J."/>
            <person name="Wang J."/>
            <person name="Deng Y."/>
            <person name="Ran L."/>
            <person name="Shi X."/>
            <person name="Wang X."/>
            <person name="Wu Q."/>
            <person name="Li C."/>
            <person name="Ren X."/>
            <person name="Wang J."/>
            <person name="Wang X."/>
            <person name="Li D."/>
            <person name="Liu D."/>
            <person name="Zhang X."/>
            <person name="Ji Z."/>
            <person name="Zhao W."/>
            <person name="Sun Y."/>
            <person name="Zhang Z."/>
            <person name="Bao J."/>
            <person name="Han Y."/>
            <person name="Dong L."/>
            <person name="Ji J."/>
            <person name="Chen P."/>
            <person name="Wu S."/>
            <person name="Liu J."/>
            <person name="Xiao Y."/>
            <person name="Bu D."/>
            <person name="Tan J."/>
            <person name="Yang L."/>
            <person name="Ye C."/>
            <person name="Zhang J."/>
            <person name="Xu J."/>
            <person name="Zhou Y."/>
            <person name="Yu Y."/>
            <person name="Zhang B."/>
            <person name="Zhuang S."/>
            <person name="Wei H."/>
            <person name="Liu B."/>
            <person name="Lei M."/>
            <person name="Yu H."/>
            <person name="Li Y."/>
            <person name="Xu H."/>
            <person name="Wei S."/>
            <person name="He X."/>
            <person name="Fang L."/>
            <person name="Zhang Z."/>
            <person name="Zhang Y."/>
            <person name="Huang X."/>
            <person name="Su Z."/>
            <person name="Tong W."/>
            <person name="Li J."/>
            <person name="Tong Z."/>
            <person name="Li S."/>
            <person name="Ye J."/>
            <person name="Wang L."/>
            <person name="Fang L."/>
            <person name="Lei T."/>
            <person name="Chen C.-S."/>
            <person name="Chen H.-C."/>
            <person name="Xu Z."/>
            <person name="Li H."/>
            <person name="Huang H."/>
            <person name="Zhang F."/>
            <person name="Xu H."/>
            <person name="Li N."/>
            <person name="Zhao C."/>
            <person name="Li S."/>
            <person name="Dong L."/>
            <person name="Huang Y."/>
            <person name="Li L."/>
            <person name="Xi Y."/>
            <person name="Qi Q."/>
            <person name="Li W."/>
            <person name="Zhang B."/>
            <person name="Hu W."/>
            <person name="Zhang Y."/>
            <person name="Tian X."/>
            <person name="Jiao Y."/>
            <person name="Liang X."/>
            <person name="Jin J."/>
            <person name="Gao L."/>
            <person name="Zheng W."/>
            <person name="Hao B."/>
            <person name="Liu S.-M."/>
            <person name="Wang W."/>
            <person name="Yuan L."/>
            <person name="Cao M."/>
            <person name="McDermott J."/>
            <person name="Samudrala R."/>
            <person name="Wang J."/>
            <person name="Wong G.K.-S."/>
            <person name="Yang H."/>
        </authorList>
    </citation>
    <scope>NUCLEOTIDE SEQUENCE [LARGE SCALE GENOMIC DNA]</scope>
    <source>
        <strain>cv. Nipponbare</strain>
    </source>
</reference>
<reference key="9">
    <citation type="journal article" date="2003" name="Science">
        <title>Collection, mapping, and annotation of over 28,000 cDNA clones from japonica rice.</title>
        <authorList>
            <consortium name="The rice full-length cDNA consortium"/>
        </authorList>
    </citation>
    <scope>NUCLEOTIDE SEQUENCE [LARGE SCALE MRNA]</scope>
    <source>
        <strain>cv. Nipponbare</strain>
    </source>
</reference>
<reference key="10">
    <citation type="journal article" date="2004" name="Plant Mol. Biol.">
        <title>Nomenclature for members of the expansin superfamily of genes and proteins.</title>
        <authorList>
            <person name="Kende H."/>
            <person name="Bradford K.J."/>
            <person name="Brummell D.A."/>
            <person name="Cho H.-T."/>
            <person name="Cosgrove D.J."/>
            <person name="Fleming A.J."/>
            <person name="Gehring C."/>
            <person name="Lee Y."/>
            <person name="McQueen-Mason S.J."/>
            <person name="Rose J.K.C."/>
            <person name="Voesenek L.A.C."/>
        </authorList>
    </citation>
    <scope>NOMENCLATURE</scope>
</reference>
<accession>Q40638</accession>
<accession>Q0DVY5</accession>
<accession>Q0DVY8</accession>
<accession>Q10SZ3</accession>
<accession>Q8GSC5</accession>
<accession>Q9LD01</accession>
<name>EXPB1_ORYSJ</name>
<keyword id="KW-0020">Allergen</keyword>
<keyword id="KW-0134">Cell wall</keyword>
<keyword id="KW-0961">Cell wall biogenesis/degradation</keyword>
<keyword id="KW-1015">Disulfide bond</keyword>
<keyword id="KW-0325">Glycoprotein</keyword>
<keyword id="KW-0472">Membrane</keyword>
<keyword id="KW-1185">Reference proteome</keyword>
<keyword id="KW-0964">Secreted</keyword>
<keyword id="KW-0732">Signal</keyword>
<dbReference type="EMBL" id="U31771">
    <property type="protein sequence ID" value="AAA86533.1"/>
    <property type="status" value="ALT_SEQ"/>
    <property type="molecule type" value="mRNA"/>
</dbReference>
<dbReference type="EMBL" id="AF261270">
    <property type="protein sequence ID" value="AAF72983.1"/>
    <property type="molecule type" value="mRNA"/>
</dbReference>
<dbReference type="EMBL" id="AY039023">
    <property type="protein sequence ID" value="AAK84682.1"/>
    <property type="molecule type" value="Genomic_DNA"/>
</dbReference>
<dbReference type="EMBL" id="AC107224">
    <property type="protein sequence ID" value="AAN60487.1"/>
    <property type="molecule type" value="Genomic_DNA"/>
</dbReference>
<dbReference type="EMBL" id="AC107224">
    <property type="protein sequence ID" value="AAN60491.1"/>
    <property type="molecule type" value="Genomic_DNA"/>
</dbReference>
<dbReference type="EMBL" id="DP000009">
    <property type="protein sequence ID" value="ABF93540.1"/>
    <property type="molecule type" value="Genomic_DNA"/>
</dbReference>
<dbReference type="EMBL" id="DP000009">
    <property type="protein sequence ID" value="ABF93536.1"/>
    <property type="molecule type" value="Genomic_DNA"/>
</dbReference>
<dbReference type="EMBL" id="AP008209">
    <property type="protein sequence ID" value="BAF10600.2"/>
    <property type="molecule type" value="Genomic_DNA"/>
</dbReference>
<dbReference type="EMBL" id="AP008209">
    <property type="protein sequence ID" value="BAF10603.1"/>
    <property type="molecule type" value="Genomic_DNA"/>
</dbReference>
<dbReference type="EMBL" id="AP014959">
    <property type="protein sequence ID" value="BAS81873.1"/>
    <property type="molecule type" value="Genomic_DNA"/>
</dbReference>
<dbReference type="EMBL" id="AP014959">
    <property type="protein sequence ID" value="BAS81878.1"/>
    <property type="molecule type" value="Genomic_DNA"/>
</dbReference>
<dbReference type="EMBL" id="CM000140">
    <property type="protein sequence ID" value="EAZ25286.1"/>
    <property type="molecule type" value="Genomic_DNA"/>
</dbReference>
<dbReference type="EMBL" id="AK072792">
    <property type="protein sequence ID" value="BAG93147.1"/>
    <property type="molecule type" value="mRNA"/>
</dbReference>
<dbReference type="PIR" id="T03303">
    <property type="entry name" value="T03303"/>
</dbReference>
<dbReference type="SMR" id="Q40638"/>
<dbReference type="FunCoup" id="Q40638">
    <property type="interactions" value="10"/>
</dbReference>
<dbReference type="STRING" id="39947.Q40638"/>
<dbReference type="Allergome" id="3394">
    <property type="allergen name" value="Ory s 1.0101"/>
</dbReference>
<dbReference type="Allergome" id="499">
    <property type="allergen name" value="Ory s 1"/>
</dbReference>
<dbReference type="GlyCosmos" id="Q40638">
    <property type="glycosylation" value="1 site, No reported glycans"/>
</dbReference>
<dbReference type="PaxDb" id="39947-Q40638"/>
<dbReference type="EnsemblPlants" id="Os03t0106500-01">
    <property type="protein sequence ID" value="Os03t0106500-01"/>
    <property type="gene ID" value="Os03g0106500"/>
</dbReference>
<dbReference type="EnsemblPlants" id="Os03t0106900-00">
    <property type="protein sequence ID" value="Os03t0106900-00"/>
    <property type="gene ID" value="Os03g0106900"/>
</dbReference>
<dbReference type="Gramene" id="Os03t0106500-01">
    <property type="protein sequence ID" value="Os03t0106500-01"/>
    <property type="gene ID" value="Os03g0106500"/>
</dbReference>
<dbReference type="Gramene" id="Os03t0106900-00">
    <property type="protein sequence ID" value="Os03t0106900-00"/>
    <property type="gene ID" value="Os03g0106900"/>
</dbReference>
<dbReference type="KEGG" id="dosa:Os03g0106500"/>
<dbReference type="KEGG" id="dosa:Os03g0106900"/>
<dbReference type="KEGG" id="osa:4331323"/>
<dbReference type="KEGG" id="osa:4331326"/>
<dbReference type="eggNOG" id="ENOG502QRTE">
    <property type="taxonomic scope" value="Eukaryota"/>
</dbReference>
<dbReference type="HOGENOM" id="CLU_027462_1_1_1"/>
<dbReference type="InParanoid" id="Q40638"/>
<dbReference type="OMA" id="CKYPTGT"/>
<dbReference type="OrthoDB" id="644057at2759"/>
<dbReference type="Proteomes" id="UP000000763">
    <property type="component" value="Chromosome 3"/>
</dbReference>
<dbReference type="Proteomes" id="UP000007752">
    <property type="component" value="Chromosome 3"/>
</dbReference>
<dbReference type="Proteomes" id="UP000059680">
    <property type="component" value="Chromosome 3"/>
</dbReference>
<dbReference type="ExpressionAtlas" id="Q40638">
    <property type="expression patterns" value="baseline"/>
</dbReference>
<dbReference type="GO" id="GO:0005576">
    <property type="term" value="C:extracellular region"/>
    <property type="evidence" value="ECO:0007669"/>
    <property type="project" value="UniProtKB-KW"/>
</dbReference>
<dbReference type="GO" id="GO:0016020">
    <property type="term" value="C:membrane"/>
    <property type="evidence" value="ECO:0007669"/>
    <property type="project" value="UniProtKB-SubCell"/>
</dbReference>
<dbReference type="GO" id="GO:0009828">
    <property type="term" value="P:plant-type cell wall loosening"/>
    <property type="evidence" value="ECO:0000250"/>
    <property type="project" value="UniProtKB"/>
</dbReference>
<dbReference type="GO" id="GO:0019953">
    <property type="term" value="P:sexual reproduction"/>
    <property type="evidence" value="ECO:0007669"/>
    <property type="project" value="InterPro"/>
</dbReference>
<dbReference type="CDD" id="cd22275">
    <property type="entry name" value="DPBB_EXPB_N"/>
    <property type="match status" value="1"/>
</dbReference>
<dbReference type="Gene3D" id="2.60.40.760">
    <property type="entry name" value="Expansin, cellulose-binding-like domain"/>
    <property type="match status" value="1"/>
</dbReference>
<dbReference type="Gene3D" id="2.40.40.10">
    <property type="entry name" value="RlpA-like domain"/>
    <property type="match status" value="1"/>
</dbReference>
<dbReference type="InterPro" id="IPR007118">
    <property type="entry name" value="Expan_Lol_pI"/>
</dbReference>
<dbReference type="InterPro" id="IPR007112">
    <property type="entry name" value="Expansin/allergen_DPBB_dom"/>
</dbReference>
<dbReference type="InterPro" id="IPR007117">
    <property type="entry name" value="Expansin_CBD"/>
</dbReference>
<dbReference type="InterPro" id="IPR036749">
    <property type="entry name" value="Expansin_CBD_sf"/>
</dbReference>
<dbReference type="InterPro" id="IPR005795">
    <property type="entry name" value="LolPI"/>
</dbReference>
<dbReference type="InterPro" id="IPR009009">
    <property type="entry name" value="RlpA-like_DPBB"/>
</dbReference>
<dbReference type="InterPro" id="IPR036908">
    <property type="entry name" value="RlpA-like_sf"/>
</dbReference>
<dbReference type="PANTHER" id="PTHR31692:SF21">
    <property type="entry name" value="EXPANSIN-B1"/>
    <property type="match status" value="1"/>
</dbReference>
<dbReference type="PANTHER" id="PTHR31692">
    <property type="entry name" value="EXPANSIN-B3"/>
    <property type="match status" value="1"/>
</dbReference>
<dbReference type="Pfam" id="PF03330">
    <property type="entry name" value="DPBB_1"/>
    <property type="match status" value="1"/>
</dbReference>
<dbReference type="Pfam" id="PF01357">
    <property type="entry name" value="Expansin_C"/>
    <property type="match status" value="1"/>
</dbReference>
<dbReference type="PRINTS" id="PR01225">
    <property type="entry name" value="EXPANSNFAMLY"/>
</dbReference>
<dbReference type="PRINTS" id="PR00829">
    <property type="entry name" value="LOLP1ALLERGN"/>
</dbReference>
<dbReference type="SMART" id="SM00837">
    <property type="entry name" value="DPBB_1"/>
    <property type="match status" value="1"/>
</dbReference>
<dbReference type="SUPFAM" id="SSF50685">
    <property type="entry name" value="Barwin-like endoglucanases"/>
    <property type="match status" value="1"/>
</dbReference>
<dbReference type="SUPFAM" id="SSF49590">
    <property type="entry name" value="PHL pollen allergen"/>
    <property type="match status" value="1"/>
</dbReference>
<dbReference type="PROSITE" id="PS50843">
    <property type="entry name" value="EXPANSIN_CBD"/>
    <property type="match status" value="1"/>
</dbReference>
<dbReference type="PROSITE" id="PS50842">
    <property type="entry name" value="EXPANSIN_EG45"/>
    <property type="match status" value="1"/>
</dbReference>
<protein>
    <recommendedName>
        <fullName>Expansin-B1</fullName>
    </recommendedName>
    <alternativeName>
        <fullName>Beta-expansin-1</fullName>
    </alternativeName>
    <alternativeName>
        <fullName>Major pollen allergen Ory s 1</fullName>
    </alternativeName>
    <alternativeName>
        <fullName>Ory s I</fullName>
    </alternativeName>
    <alternativeName>
        <fullName>OsEXPB1</fullName>
    </alternativeName>
    <alternativeName>
        <fullName>OsaEXPb1.2</fullName>
    </alternativeName>
    <alternativeName>
        <fullName>OsaEXPb1.3</fullName>
    </alternativeName>
    <allergenName>Ory s 1</allergenName>
</protein>
<sequence length="267" mass="28627">MASSSLLLACVVVAAMVSAVSCGPPKVPPGPNITTSYGDKWLEAKATWYGAPKGAGPKDNGGACGYKDVDKAPFLGMNSCGNDPIFKDGKGCGSCFEIKCSKPEACSDKPALIHVTDMNDEPIAAYHFDLSGLAFGAMAKDGKDEELRKAGIIDTQFRRVKCKYPADTKITFHIEKASNPNYLALLVKYVAGDGDVVEVEIKEKGSEEWKALKESWGAIWRIDTPKPLKGPFSVRVTTEGGEKIIAEDAIPDGWKADSVYKSNVQAK</sequence>
<evidence type="ECO:0000250" key="1"/>
<evidence type="ECO:0000255" key="2"/>
<evidence type="ECO:0000255" key="3">
    <source>
        <dbReference type="PROSITE-ProRule" id="PRU00078"/>
    </source>
</evidence>
<evidence type="ECO:0000255" key="4">
    <source>
        <dbReference type="PROSITE-ProRule" id="PRU00079"/>
    </source>
</evidence>
<evidence type="ECO:0000269" key="5">
    <source>
    </source>
</evidence>
<evidence type="ECO:0000305" key="6"/>